<reference key="1">
    <citation type="journal article" date="2015" name="Genome Announc.">
        <title>Complete genome sequence of Anaeromyxobacter sp. Fw109-5, an anaerobic, metal-reducing bacterium isolated from a contaminated subsurface environment.</title>
        <authorList>
            <person name="Hwang C."/>
            <person name="Copeland A."/>
            <person name="Lucas S."/>
            <person name="Lapidus A."/>
            <person name="Barry K."/>
            <person name="Glavina Del Rio T."/>
            <person name="Dalin E."/>
            <person name="Tice H."/>
            <person name="Pitluck S."/>
            <person name="Sims D."/>
            <person name="Brettin T."/>
            <person name="Bruce D.C."/>
            <person name="Detter J.C."/>
            <person name="Han C.S."/>
            <person name="Schmutz J."/>
            <person name="Larimer F.W."/>
            <person name="Land M.L."/>
            <person name="Hauser L.J."/>
            <person name="Kyrpides N."/>
            <person name="Lykidis A."/>
            <person name="Richardson P."/>
            <person name="Belieav A."/>
            <person name="Sanford R.A."/>
            <person name="Loeffler F.E."/>
            <person name="Fields M.W."/>
        </authorList>
    </citation>
    <scope>NUCLEOTIDE SEQUENCE [LARGE SCALE GENOMIC DNA]</scope>
    <source>
        <strain>Fw109-5</strain>
    </source>
</reference>
<evidence type="ECO:0000255" key="1">
    <source>
        <dbReference type="HAMAP-Rule" id="MF_00303"/>
    </source>
</evidence>
<organism>
    <name type="scientific">Anaeromyxobacter sp. (strain Fw109-5)</name>
    <dbReference type="NCBI Taxonomy" id="404589"/>
    <lineage>
        <taxon>Bacteria</taxon>
        <taxon>Pseudomonadati</taxon>
        <taxon>Myxococcota</taxon>
        <taxon>Myxococcia</taxon>
        <taxon>Myxococcales</taxon>
        <taxon>Cystobacterineae</taxon>
        <taxon>Anaeromyxobacteraceae</taxon>
        <taxon>Anaeromyxobacter</taxon>
    </lineage>
</organism>
<comment type="function">
    <text evidence="1">Involved in protein export. Acts as a chaperone by maintaining the newly synthesized protein in an open conformation. Functions as a peptidyl-prolyl cis-trans isomerase.</text>
</comment>
<comment type="catalytic activity">
    <reaction evidence="1">
        <text>[protein]-peptidylproline (omega=180) = [protein]-peptidylproline (omega=0)</text>
        <dbReference type="Rhea" id="RHEA:16237"/>
        <dbReference type="Rhea" id="RHEA-COMP:10747"/>
        <dbReference type="Rhea" id="RHEA-COMP:10748"/>
        <dbReference type="ChEBI" id="CHEBI:83833"/>
        <dbReference type="ChEBI" id="CHEBI:83834"/>
        <dbReference type="EC" id="5.2.1.8"/>
    </reaction>
</comment>
<comment type="subcellular location">
    <subcellularLocation>
        <location>Cytoplasm</location>
    </subcellularLocation>
    <text evidence="1">About half TF is bound to the ribosome near the polypeptide exit tunnel while the other half is free in the cytoplasm.</text>
</comment>
<comment type="domain">
    <text evidence="1">Consists of 3 domains; the N-terminus binds the ribosome, the middle domain has PPIase activity, while the C-terminus has intrinsic chaperone activity on its own.</text>
</comment>
<comment type="similarity">
    <text evidence="1">Belongs to the FKBP-type PPIase family. Tig subfamily.</text>
</comment>
<dbReference type="EC" id="5.2.1.8" evidence="1"/>
<dbReference type="EMBL" id="CP000769">
    <property type="protein sequence ID" value="ABS27606.1"/>
    <property type="molecule type" value="Genomic_DNA"/>
</dbReference>
<dbReference type="RefSeq" id="WP_012098226.1">
    <property type="nucleotide sequence ID" value="NC_009675.1"/>
</dbReference>
<dbReference type="SMR" id="A7HFW0"/>
<dbReference type="STRING" id="404589.Anae109_3422"/>
<dbReference type="KEGG" id="afw:Anae109_3422"/>
<dbReference type="eggNOG" id="COG0544">
    <property type="taxonomic scope" value="Bacteria"/>
</dbReference>
<dbReference type="HOGENOM" id="CLU_033058_3_1_7"/>
<dbReference type="OrthoDB" id="9767721at2"/>
<dbReference type="Proteomes" id="UP000006382">
    <property type="component" value="Chromosome"/>
</dbReference>
<dbReference type="GO" id="GO:0005737">
    <property type="term" value="C:cytoplasm"/>
    <property type="evidence" value="ECO:0007669"/>
    <property type="project" value="UniProtKB-SubCell"/>
</dbReference>
<dbReference type="GO" id="GO:0003755">
    <property type="term" value="F:peptidyl-prolyl cis-trans isomerase activity"/>
    <property type="evidence" value="ECO:0007669"/>
    <property type="project" value="UniProtKB-UniRule"/>
</dbReference>
<dbReference type="GO" id="GO:0044183">
    <property type="term" value="F:protein folding chaperone"/>
    <property type="evidence" value="ECO:0007669"/>
    <property type="project" value="TreeGrafter"/>
</dbReference>
<dbReference type="GO" id="GO:0043022">
    <property type="term" value="F:ribosome binding"/>
    <property type="evidence" value="ECO:0007669"/>
    <property type="project" value="TreeGrafter"/>
</dbReference>
<dbReference type="GO" id="GO:0051083">
    <property type="term" value="P:'de novo' cotranslational protein folding"/>
    <property type="evidence" value="ECO:0007669"/>
    <property type="project" value="TreeGrafter"/>
</dbReference>
<dbReference type="GO" id="GO:0051301">
    <property type="term" value="P:cell division"/>
    <property type="evidence" value="ECO:0007669"/>
    <property type="project" value="UniProtKB-KW"/>
</dbReference>
<dbReference type="GO" id="GO:0061077">
    <property type="term" value="P:chaperone-mediated protein folding"/>
    <property type="evidence" value="ECO:0007669"/>
    <property type="project" value="TreeGrafter"/>
</dbReference>
<dbReference type="GO" id="GO:0015031">
    <property type="term" value="P:protein transport"/>
    <property type="evidence" value="ECO:0007669"/>
    <property type="project" value="UniProtKB-UniRule"/>
</dbReference>
<dbReference type="GO" id="GO:0043335">
    <property type="term" value="P:protein unfolding"/>
    <property type="evidence" value="ECO:0007669"/>
    <property type="project" value="TreeGrafter"/>
</dbReference>
<dbReference type="Gene3D" id="3.10.50.40">
    <property type="match status" value="1"/>
</dbReference>
<dbReference type="Gene3D" id="3.30.70.1050">
    <property type="entry name" value="Trigger factor ribosome-binding domain"/>
    <property type="match status" value="1"/>
</dbReference>
<dbReference type="Gene3D" id="1.10.3120.10">
    <property type="entry name" value="Trigger factor, C-terminal domain"/>
    <property type="match status" value="1"/>
</dbReference>
<dbReference type="HAMAP" id="MF_00303">
    <property type="entry name" value="Trigger_factor_Tig"/>
    <property type="match status" value="1"/>
</dbReference>
<dbReference type="InterPro" id="IPR046357">
    <property type="entry name" value="PPIase_dom_sf"/>
</dbReference>
<dbReference type="InterPro" id="IPR001179">
    <property type="entry name" value="PPIase_FKBP_dom"/>
</dbReference>
<dbReference type="InterPro" id="IPR005215">
    <property type="entry name" value="Trig_fac"/>
</dbReference>
<dbReference type="InterPro" id="IPR008880">
    <property type="entry name" value="Trigger_fac_C"/>
</dbReference>
<dbReference type="InterPro" id="IPR037041">
    <property type="entry name" value="Trigger_fac_C_sf"/>
</dbReference>
<dbReference type="InterPro" id="IPR008881">
    <property type="entry name" value="Trigger_fac_ribosome-bd_bac"/>
</dbReference>
<dbReference type="InterPro" id="IPR036611">
    <property type="entry name" value="Trigger_fac_ribosome-bd_sf"/>
</dbReference>
<dbReference type="InterPro" id="IPR027304">
    <property type="entry name" value="Trigger_fact/SurA_dom_sf"/>
</dbReference>
<dbReference type="NCBIfam" id="TIGR00115">
    <property type="entry name" value="tig"/>
    <property type="match status" value="1"/>
</dbReference>
<dbReference type="PANTHER" id="PTHR30560">
    <property type="entry name" value="TRIGGER FACTOR CHAPERONE AND PEPTIDYL-PROLYL CIS/TRANS ISOMERASE"/>
    <property type="match status" value="1"/>
</dbReference>
<dbReference type="PANTHER" id="PTHR30560:SF3">
    <property type="entry name" value="TRIGGER FACTOR-LIKE PROTEIN TIG, CHLOROPLASTIC"/>
    <property type="match status" value="1"/>
</dbReference>
<dbReference type="Pfam" id="PF00254">
    <property type="entry name" value="FKBP_C"/>
    <property type="match status" value="1"/>
</dbReference>
<dbReference type="Pfam" id="PF05698">
    <property type="entry name" value="Trigger_C"/>
    <property type="match status" value="1"/>
</dbReference>
<dbReference type="Pfam" id="PF05697">
    <property type="entry name" value="Trigger_N"/>
    <property type="match status" value="1"/>
</dbReference>
<dbReference type="PIRSF" id="PIRSF003095">
    <property type="entry name" value="Trigger_factor"/>
    <property type="match status" value="1"/>
</dbReference>
<dbReference type="SUPFAM" id="SSF54534">
    <property type="entry name" value="FKBP-like"/>
    <property type="match status" value="1"/>
</dbReference>
<dbReference type="SUPFAM" id="SSF109998">
    <property type="entry name" value="Triger factor/SurA peptide-binding domain-like"/>
    <property type="match status" value="1"/>
</dbReference>
<dbReference type="SUPFAM" id="SSF102735">
    <property type="entry name" value="Trigger factor ribosome-binding domain"/>
    <property type="match status" value="1"/>
</dbReference>
<accession>A7HFW0</accession>
<sequence length="430" mass="47369">MKIQVENVSPVERKVSIEVDPDRVAQELERAYAGLGRRVKLRGFRPGKAPRKVLERQFRAEVESEVLEKIVQQTFAEAVKVESLPLVAPPHVSVSEGVADGKPIRYTARVEVKPAIAPKDYRGLEVTRKAPEVTDQMVSDELSRLQDSLAQLVPVEGRFEAQEDDWAVIDHEGTIDGKPFEGGKAEGVTVKVAPGAISDGNLEALKGKKLGETVELDEPFPEDHRVEQLRGKTAHMKVTLKALKTRQLPALDDALAKEAGVEGIETLDALRARIRADLEKREKRRAESEVKDALVKAALAKNEFEVPPALVERAIDSMLEGAAERFARSGIDIRRLELDFAKMRADMREQALLQVRGALLLEAIADAEKIEVTDEDLQAEAARIAEELGAPLAKVQQQMRGKDAREALKNKVREDKALALLSSAANIQPA</sequence>
<feature type="chain" id="PRO_0000322442" description="Trigger factor">
    <location>
        <begin position="1"/>
        <end position="430"/>
    </location>
</feature>
<feature type="domain" description="PPIase FKBP-type" evidence="1">
    <location>
        <begin position="164"/>
        <end position="249"/>
    </location>
</feature>
<proteinExistence type="inferred from homology"/>
<name>TIG_ANADF</name>
<keyword id="KW-0131">Cell cycle</keyword>
<keyword id="KW-0132">Cell division</keyword>
<keyword id="KW-0143">Chaperone</keyword>
<keyword id="KW-0963">Cytoplasm</keyword>
<keyword id="KW-0413">Isomerase</keyword>
<keyword id="KW-1185">Reference proteome</keyword>
<keyword id="KW-0697">Rotamase</keyword>
<gene>
    <name evidence="1" type="primary">tig</name>
    <name type="ordered locus">Anae109_3422</name>
</gene>
<protein>
    <recommendedName>
        <fullName evidence="1">Trigger factor</fullName>
        <shortName evidence="1">TF</shortName>
        <ecNumber evidence="1">5.2.1.8</ecNumber>
    </recommendedName>
    <alternativeName>
        <fullName evidence="1">PPIase</fullName>
    </alternativeName>
</protein>